<gene>
    <name type="ordered locus">SERP1770</name>
</gene>
<evidence type="ECO:0000250" key="1">
    <source>
        <dbReference type="UniProtKB" id="Q9M9P3"/>
    </source>
</evidence>
<evidence type="ECO:0000305" key="2"/>
<reference key="1">
    <citation type="journal article" date="2005" name="J. Bacteriol.">
        <title>Insights on evolution of virulence and resistance from the complete genome analysis of an early methicillin-resistant Staphylococcus aureus strain and a biofilm-producing methicillin-resistant Staphylococcus epidermidis strain.</title>
        <authorList>
            <person name="Gill S.R."/>
            <person name="Fouts D.E."/>
            <person name="Archer G.L."/>
            <person name="Mongodin E.F."/>
            <person name="DeBoy R.T."/>
            <person name="Ravel J."/>
            <person name="Paulsen I.T."/>
            <person name="Kolonay J.F."/>
            <person name="Brinkac L.M."/>
            <person name="Beanan M.J."/>
            <person name="Dodson R.J."/>
            <person name="Daugherty S.C."/>
            <person name="Madupu R."/>
            <person name="Angiuoli S.V."/>
            <person name="Durkin A.S."/>
            <person name="Haft D.H."/>
            <person name="Vamathevan J.J."/>
            <person name="Khouri H."/>
            <person name="Utterback T.R."/>
            <person name="Lee C."/>
            <person name="Dimitrov G."/>
            <person name="Jiang L."/>
            <person name="Qin H."/>
            <person name="Weidman J."/>
            <person name="Tran K."/>
            <person name="Kang K.H."/>
            <person name="Hance I.R."/>
            <person name="Nelson K.E."/>
            <person name="Fraser C.M."/>
        </authorList>
    </citation>
    <scope>NUCLEOTIDE SEQUENCE [LARGE SCALE GENOMIC DNA]</scope>
    <source>
        <strain>ATCC 35984 / DSM 28319 / BCRC 17069 / CCUG 31568 / BM 3577 / RP62A</strain>
    </source>
</reference>
<organism>
    <name type="scientific">Staphylococcus epidermidis (strain ATCC 35984 / DSM 28319 / BCRC 17069 / CCUG 31568 / BM 3577 / RP62A)</name>
    <dbReference type="NCBI Taxonomy" id="176279"/>
    <lineage>
        <taxon>Bacteria</taxon>
        <taxon>Bacillati</taxon>
        <taxon>Bacillota</taxon>
        <taxon>Bacilli</taxon>
        <taxon>Bacillales</taxon>
        <taxon>Staphylococcaceae</taxon>
        <taxon>Staphylococcus</taxon>
    </lineage>
</organism>
<dbReference type="EC" id="2.7.7.-"/>
<dbReference type="EMBL" id="CP000029">
    <property type="protein sequence ID" value="AAW55129.1"/>
    <property type="molecule type" value="Genomic_DNA"/>
</dbReference>
<dbReference type="RefSeq" id="WP_002456999.1">
    <property type="nucleotide sequence ID" value="NC_002976.3"/>
</dbReference>
<dbReference type="SMR" id="Q5HM59"/>
<dbReference type="STRING" id="176279.SERP1770"/>
<dbReference type="KEGG" id="ser:SERP1770"/>
<dbReference type="eggNOG" id="COG4284">
    <property type="taxonomic scope" value="Bacteria"/>
</dbReference>
<dbReference type="HOGENOM" id="CLU_025603_1_2_9"/>
<dbReference type="Proteomes" id="UP000000531">
    <property type="component" value="Chromosome"/>
</dbReference>
<dbReference type="GO" id="GO:0070569">
    <property type="term" value="F:uridylyltransferase activity"/>
    <property type="evidence" value="ECO:0007669"/>
    <property type="project" value="InterPro"/>
</dbReference>
<dbReference type="CDD" id="cd04193">
    <property type="entry name" value="UDPGlcNAc_PPase"/>
    <property type="match status" value="1"/>
</dbReference>
<dbReference type="Gene3D" id="3.90.550.10">
    <property type="entry name" value="Spore Coat Polysaccharide Biosynthesis Protein SpsA, Chain A"/>
    <property type="match status" value="1"/>
</dbReference>
<dbReference type="InterPro" id="IPR029044">
    <property type="entry name" value="Nucleotide-diphossugar_trans"/>
</dbReference>
<dbReference type="InterPro" id="IPR039741">
    <property type="entry name" value="UDP-sugar_pyrophosphorylase"/>
</dbReference>
<dbReference type="InterPro" id="IPR002618">
    <property type="entry name" value="UDPGP_fam"/>
</dbReference>
<dbReference type="PANTHER" id="PTHR11952:SF2">
    <property type="entry name" value="LD24639P"/>
    <property type="match status" value="1"/>
</dbReference>
<dbReference type="PANTHER" id="PTHR11952">
    <property type="entry name" value="UDP- GLUCOSE PYROPHOSPHORYLASE"/>
    <property type="match status" value="1"/>
</dbReference>
<dbReference type="Pfam" id="PF01704">
    <property type="entry name" value="UDPGP"/>
    <property type="match status" value="1"/>
</dbReference>
<dbReference type="SUPFAM" id="SSF53448">
    <property type="entry name" value="Nucleotide-diphospho-sugar transferases"/>
    <property type="match status" value="1"/>
</dbReference>
<comment type="similarity">
    <text evidence="2">Belongs to the UDPGP type 1 family.</text>
</comment>
<keyword id="KW-0548">Nucleotidyltransferase</keyword>
<keyword id="KW-1185">Reference proteome</keyword>
<keyword id="KW-0808">Transferase</keyword>
<feature type="chain" id="PRO_0000271315" description="Probable uridylyltransferase SERP1770">
    <location>
        <begin position="1"/>
        <end position="395"/>
    </location>
</feature>
<feature type="binding site" evidence="1">
    <location>
        <begin position="99"/>
        <end position="102"/>
    </location>
    <ligand>
        <name>UTP</name>
        <dbReference type="ChEBI" id="CHEBI:46398"/>
    </ligand>
</feature>
<feature type="binding site" evidence="1">
    <location>
        <position position="113"/>
    </location>
    <ligand>
        <name>UTP</name>
        <dbReference type="ChEBI" id="CHEBI:46398"/>
    </ligand>
</feature>
<feature type="binding site" evidence="1">
    <location>
        <position position="178"/>
    </location>
    <ligand>
        <name>UTP</name>
        <dbReference type="ChEBI" id="CHEBI:46398"/>
    </ligand>
</feature>
<feature type="binding site" evidence="1">
    <location>
        <position position="204"/>
    </location>
    <ligand>
        <name>UTP</name>
        <dbReference type="ChEBI" id="CHEBI:46398"/>
    </ligand>
</feature>
<feature type="binding site" evidence="1">
    <location>
        <position position="235"/>
    </location>
    <ligand>
        <name>UTP</name>
        <dbReference type="ChEBI" id="CHEBI:46398"/>
    </ligand>
</feature>
<feature type="binding site" evidence="1">
    <location>
        <position position="344"/>
    </location>
    <ligand>
        <name>UTP</name>
        <dbReference type="ChEBI" id="CHEBI:46398"/>
    </ligand>
</feature>
<proteinExistence type="inferred from homology"/>
<name>URTF_STAEQ</name>
<sequence length="395" mass="45706">MLDKNQLEKYNQEHLYEYEKLMSSNEKNALDEKVDQLNLAEIQDLYQDLYVNRKTIDDVSSVSEVKYEVKSRLNEEERHTYEQKGYEAIRNGEFAVLLMAGGQGTRLGYKGPKGSFEIEGTSLFELQARQLIRLKEETGHTINWYIMTSDINHKDTIEYFKQHKYFNYDANHIHFFKQDNIVALSEEGKLVLNRDGHIMETPNGNGGVFKSLKKAGYLDKMQQDHVKYIFLNNIDNVLVKVLDPLFAGFTVTQSKDITSKTIQPKDSESVGRLVNVDCKDTVLEYSELDTDIANQFNNANIGIHAFKLGFITSAVDRELPYHLAIKQLKQLDENFGVVERPTLKFELFYFDIFRYGTSFVTLQVPREEEFSPLKNKEGKDSVHTATEDLKRMDLI</sequence>
<accession>Q5HM59</accession>
<protein>
    <recommendedName>
        <fullName>Probable uridylyltransferase SERP1770</fullName>
        <ecNumber>2.7.7.-</ecNumber>
    </recommendedName>
</protein>